<name>MAP11_SYNY3</name>
<reference key="1">
    <citation type="journal article" date="1995" name="DNA Res.">
        <title>Sequence analysis of the genome of the unicellular cyanobacterium Synechocystis sp. strain PCC6803. I. Sequence features in the 1 Mb region from map positions 64% to 92% of the genome.</title>
        <authorList>
            <person name="Kaneko T."/>
            <person name="Tanaka A."/>
            <person name="Sato S."/>
            <person name="Kotani H."/>
            <person name="Sazuka T."/>
            <person name="Miyajima N."/>
            <person name="Sugiura M."/>
            <person name="Tabata S."/>
        </authorList>
    </citation>
    <scope>NUCLEOTIDE SEQUENCE [LARGE SCALE GENOMIC DNA]</scope>
    <source>
        <strain>ATCC 27184 / PCC 6803 / N-1</strain>
    </source>
</reference>
<reference key="2">
    <citation type="journal article" date="1996" name="DNA Res.">
        <title>Sequence analysis of the genome of the unicellular cyanobacterium Synechocystis sp. strain PCC6803. II. Sequence determination of the entire genome and assignment of potential protein-coding regions.</title>
        <authorList>
            <person name="Kaneko T."/>
            <person name="Sato S."/>
            <person name="Kotani H."/>
            <person name="Tanaka A."/>
            <person name="Asamizu E."/>
            <person name="Nakamura Y."/>
            <person name="Miyajima N."/>
            <person name="Hirosawa M."/>
            <person name="Sugiura M."/>
            <person name="Sasamoto S."/>
            <person name="Kimura T."/>
            <person name="Hosouchi T."/>
            <person name="Matsuno A."/>
            <person name="Muraki A."/>
            <person name="Nakazaki N."/>
            <person name="Naruo K."/>
            <person name="Okumura S."/>
            <person name="Shimpo S."/>
            <person name="Takeuchi C."/>
            <person name="Wada T."/>
            <person name="Watanabe A."/>
            <person name="Yamada M."/>
            <person name="Yasuda M."/>
            <person name="Tabata S."/>
        </authorList>
    </citation>
    <scope>NUCLEOTIDE SEQUENCE [LARGE SCALE GENOMIC DNA]</scope>
    <source>
        <strain>ATCC 27184 / PCC 6803 / Kazusa</strain>
    </source>
</reference>
<gene>
    <name type="ordered locus">slr0918</name>
</gene>
<comment type="function">
    <text evidence="1">Removes the N-terminal methionine from nascent proteins. The N-terminal methionine is often cleaved when the second residue in the primary sequence is small and uncharged (Met-Ala-, Cys, Gly, Pro, Ser, Thr, or Val). Requires deformylation of the N(alpha)-formylated initiator methionine before it can be hydrolyzed.</text>
</comment>
<comment type="catalytic activity">
    <reaction evidence="1">
        <text>Release of N-terminal amino acids, preferentially methionine, from peptides and arylamides.</text>
        <dbReference type="EC" id="3.4.11.18"/>
    </reaction>
</comment>
<comment type="cofactor">
    <cofactor evidence="1">
        <name>Co(2+)</name>
        <dbReference type="ChEBI" id="CHEBI:48828"/>
    </cofactor>
    <cofactor evidence="1">
        <name>Zn(2+)</name>
        <dbReference type="ChEBI" id="CHEBI:29105"/>
    </cofactor>
    <cofactor evidence="1">
        <name>Mn(2+)</name>
        <dbReference type="ChEBI" id="CHEBI:29035"/>
    </cofactor>
    <cofactor evidence="1">
        <name>Fe(2+)</name>
        <dbReference type="ChEBI" id="CHEBI:29033"/>
    </cofactor>
    <text evidence="1">Binds 2 divalent metal cations per subunit. Has a high-affinity and a low affinity metal-binding site. The true nature of the physiological cofactor is under debate. The enzyme is active with cobalt, zinc, manganese or divalent iron ions. Most likely, methionine aminopeptidases function as mononuclear Fe(2+)-metalloproteases under physiological conditions, and the catalytically relevant metal-binding site has been assigned to the histidine-containing high-affinity site.</text>
</comment>
<comment type="subunit">
    <text evidence="1">Monomer.</text>
</comment>
<comment type="similarity">
    <text evidence="1">Belongs to the peptidase M24A family. Methionine aminopeptidase type 1 subfamily.</text>
</comment>
<dbReference type="EC" id="3.4.11.18" evidence="1"/>
<dbReference type="EMBL" id="BA000022">
    <property type="protein sequence ID" value="BAA10466.1"/>
    <property type="molecule type" value="Genomic_DNA"/>
</dbReference>
<dbReference type="PIR" id="S75731">
    <property type="entry name" value="S75731"/>
</dbReference>
<dbReference type="SMR" id="P53579"/>
<dbReference type="STRING" id="1148.gene:10499969"/>
<dbReference type="MEROPS" id="M24.001"/>
<dbReference type="PaxDb" id="1148-1001226"/>
<dbReference type="EnsemblBacteria" id="BAA10466">
    <property type="protein sequence ID" value="BAA10466"/>
    <property type="gene ID" value="BAA10466"/>
</dbReference>
<dbReference type="KEGG" id="syn:slr0918"/>
<dbReference type="eggNOG" id="COG0024">
    <property type="taxonomic scope" value="Bacteria"/>
</dbReference>
<dbReference type="InParanoid" id="P53579"/>
<dbReference type="PhylomeDB" id="P53579"/>
<dbReference type="Proteomes" id="UP000001425">
    <property type="component" value="Chromosome"/>
</dbReference>
<dbReference type="GO" id="GO:0005829">
    <property type="term" value="C:cytosol"/>
    <property type="evidence" value="ECO:0000318"/>
    <property type="project" value="GO_Central"/>
</dbReference>
<dbReference type="GO" id="GO:0004239">
    <property type="term" value="F:initiator methionyl aminopeptidase activity"/>
    <property type="evidence" value="ECO:0007669"/>
    <property type="project" value="UniProtKB-UniRule"/>
</dbReference>
<dbReference type="GO" id="GO:0046872">
    <property type="term" value="F:metal ion binding"/>
    <property type="evidence" value="ECO:0007669"/>
    <property type="project" value="UniProtKB-UniRule"/>
</dbReference>
<dbReference type="GO" id="GO:0070006">
    <property type="term" value="F:metalloaminopeptidase activity"/>
    <property type="evidence" value="ECO:0000318"/>
    <property type="project" value="GO_Central"/>
</dbReference>
<dbReference type="GO" id="GO:0006508">
    <property type="term" value="P:proteolysis"/>
    <property type="evidence" value="ECO:0007669"/>
    <property type="project" value="UniProtKB-KW"/>
</dbReference>
<dbReference type="CDD" id="cd01086">
    <property type="entry name" value="MetAP1"/>
    <property type="match status" value="1"/>
</dbReference>
<dbReference type="Gene3D" id="3.90.230.10">
    <property type="entry name" value="Creatinase/methionine aminopeptidase superfamily"/>
    <property type="match status" value="1"/>
</dbReference>
<dbReference type="HAMAP" id="MF_01974">
    <property type="entry name" value="MetAP_1"/>
    <property type="match status" value="1"/>
</dbReference>
<dbReference type="InterPro" id="IPR036005">
    <property type="entry name" value="Creatinase/aminopeptidase-like"/>
</dbReference>
<dbReference type="InterPro" id="IPR000994">
    <property type="entry name" value="Pept_M24"/>
</dbReference>
<dbReference type="InterPro" id="IPR001714">
    <property type="entry name" value="Pept_M24_MAP"/>
</dbReference>
<dbReference type="InterPro" id="IPR002467">
    <property type="entry name" value="Pept_M24A_MAP1"/>
</dbReference>
<dbReference type="NCBIfam" id="TIGR00500">
    <property type="entry name" value="met_pdase_I"/>
    <property type="match status" value="1"/>
</dbReference>
<dbReference type="PANTHER" id="PTHR43330">
    <property type="entry name" value="METHIONINE AMINOPEPTIDASE"/>
    <property type="match status" value="1"/>
</dbReference>
<dbReference type="PANTHER" id="PTHR43330:SF27">
    <property type="entry name" value="METHIONINE AMINOPEPTIDASE"/>
    <property type="match status" value="1"/>
</dbReference>
<dbReference type="Pfam" id="PF00557">
    <property type="entry name" value="Peptidase_M24"/>
    <property type="match status" value="1"/>
</dbReference>
<dbReference type="PRINTS" id="PR00599">
    <property type="entry name" value="MAPEPTIDASE"/>
</dbReference>
<dbReference type="SUPFAM" id="SSF55920">
    <property type="entry name" value="Creatinase/aminopeptidase"/>
    <property type="match status" value="1"/>
</dbReference>
<dbReference type="PROSITE" id="PS00680">
    <property type="entry name" value="MAP_1"/>
    <property type="match status" value="1"/>
</dbReference>
<feature type="chain" id="PRO_0000148963" description="Methionine aminopeptidase A">
    <location>
        <begin position="1"/>
        <end position="253"/>
    </location>
</feature>
<feature type="binding site" evidence="1">
    <location>
        <position position="80"/>
    </location>
    <ligand>
        <name>substrate</name>
    </ligand>
</feature>
<feature type="binding site" evidence="1">
    <location>
        <position position="98"/>
    </location>
    <ligand>
        <name>a divalent metal cation</name>
        <dbReference type="ChEBI" id="CHEBI:60240"/>
        <label>1</label>
    </ligand>
</feature>
<feature type="binding site" evidence="1">
    <location>
        <position position="109"/>
    </location>
    <ligand>
        <name>a divalent metal cation</name>
        <dbReference type="ChEBI" id="CHEBI:60240"/>
        <label>1</label>
    </ligand>
</feature>
<feature type="binding site" evidence="1">
    <location>
        <position position="109"/>
    </location>
    <ligand>
        <name>a divalent metal cation</name>
        <dbReference type="ChEBI" id="CHEBI:60240"/>
        <label>2</label>
        <note>catalytic</note>
    </ligand>
</feature>
<feature type="binding site" evidence="1">
    <location>
        <position position="172"/>
    </location>
    <ligand>
        <name>a divalent metal cation</name>
        <dbReference type="ChEBI" id="CHEBI:60240"/>
        <label>2</label>
        <note>catalytic</note>
    </ligand>
</feature>
<feature type="binding site" evidence="1">
    <location>
        <position position="179"/>
    </location>
    <ligand>
        <name>substrate</name>
    </ligand>
</feature>
<feature type="binding site" evidence="1">
    <location>
        <position position="205"/>
    </location>
    <ligand>
        <name>a divalent metal cation</name>
        <dbReference type="ChEBI" id="CHEBI:60240"/>
        <label>2</label>
        <note>catalytic</note>
    </ligand>
</feature>
<feature type="binding site" evidence="1">
    <location>
        <position position="236"/>
    </location>
    <ligand>
        <name>a divalent metal cation</name>
        <dbReference type="ChEBI" id="CHEBI:60240"/>
        <label>1</label>
    </ligand>
</feature>
<feature type="binding site" evidence="1">
    <location>
        <position position="236"/>
    </location>
    <ligand>
        <name>a divalent metal cation</name>
        <dbReference type="ChEBI" id="CHEBI:60240"/>
        <label>2</label>
        <note>catalytic</note>
    </ligand>
</feature>
<protein>
    <recommendedName>
        <fullName evidence="1">Methionine aminopeptidase A</fullName>
        <shortName evidence="1">MAP A</shortName>
        <shortName evidence="1">MetAP A</shortName>
        <ecNumber evidence="1">3.4.11.18</ecNumber>
    </recommendedName>
    <alternativeName>
        <fullName evidence="1">Peptidase M</fullName>
    </alternativeName>
</protein>
<sequence>MGDTITLLSRREIEKMRQAGQLAAALLDHLAPMVQPGITTLELNDEAEKWTKAHGAISAPLGYNGFPKSICTSINEVICHGIPHRKRVLQAGDIINVDVTPIVDGYHGDCSRTFFVGTPSPVAEKLVKVTEECLRLGIEAVKPGGKIGDIGAAIQSHAEAQGFSVVRDFVGHGISKIFHTAPQIPHYGKAGKGKRLRPGMVFTIEPMINEGTWEAVLLDDGWTAITKDGKLSAQFEHTIAVTEDGVEILTLGE</sequence>
<accession>P53579</accession>
<evidence type="ECO:0000255" key="1">
    <source>
        <dbReference type="HAMAP-Rule" id="MF_01974"/>
    </source>
</evidence>
<organism>
    <name type="scientific">Synechocystis sp. (strain ATCC 27184 / PCC 6803 / Kazusa)</name>
    <dbReference type="NCBI Taxonomy" id="1111708"/>
    <lineage>
        <taxon>Bacteria</taxon>
        <taxon>Bacillati</taxon>
        <taxon>Cyanobacteriota</taxon>
        <taxon>Cyanophyceae</taxon>
        <taxon>Synechococcales</taxon>
        <taxon>Merismopediaceae</taxon>
        <taxon>Synechocystis</taxon>
    </lineage>
</organism>
<keyword id="KW-0031">Aminopeptidase</keyword>
<keyword id="KW-0378">Hydrolase</keyword>
<keyword id="KW-0479">Metal-binding</keyword>
<keyword id="KW-0645">Protease</keyword>
<keyword id="KW-1185">Reference proteome</keyword>
<proteinExistence type="inferred from homology"/>